<organism>
    <name type="scientific">Homo sapiens</name>
    <name type="common">Human</name>
    <dbReference type="NCBI Taxonomy" id="9606"/>
    <lineage>
        <taxon>Eukaryota</taxon>
        <taxon>Metazoa</taxon>
        <taxon>Chordata</taxon>
        <taxon>Craniata</taxon>
        <taxon>Vertebrata</taxon>
        <taxon>Euteleostomi</taxon>
        <taxon>Mammalia</taxon>
        <taxon>Eutheria</taxon>
        <taxon>Euarchontoglires</taxon>
        <taxon>Primates</taxon>
        <taxon>Haplorrhini</taxon>
        <taxon>Catarrhini</taxon>
        <taxon>Hominidae</taxon>
        <taxon>Homo</taxon>
    </lineage>
</organism>
<proteinExistence type="evidence at protein level"/>
<protein>
    <recommendedName>
        <fullName>Mitochondrial coenzyme A transporter SLC25A42</fullName>
    </recommendedName>
    <alternativeName>
        <fullName>Solute carrier family 25 member 42</fullName>
    </alternativeName>
</protein>
<sequence length="318" mass="35409">MGNGVKEGPVRLHEDAEAVLSSSVSSKRDHRQVLSSLLSGALAGALAKTAVAPLDRTKIIFQVSSKRFSAKEAFRVLYYTYLNEGFLSLWRGNSATMVRVVPYAAIQFSAHEEYKRILGSYYGFRGEALPPWPRLFAGALAGTTAASLTYPLDLVRARMAVTPKEMYSNIFHVFIRISREEGLKTLYHGFMPTVLGVIPYAGLSFFTYETLKSLHREYSGRRQPYPFERMIFGACAGLIGQSASYPLDVVRRRMQTAGVTGYPRASIARTLRTIVREEGAVRGLYKGLSMNWVKGPIAVGISFTTFDLMQILLRHLQS</sequence>
<feature type="chain" id="PRO_0000292336" description="Mitochondrial coenzyme A transporter SLC25A42">
    <location>
        <begin position="1"/>
        <end position="318"/>
    </location>
</feature>
<feature type="transmembrane region" description="Helical; Name=1" evidence="1">
    <location>
        <begin position="33"/>
        <end position="53"/>
    </location>
</feature>
<feature type="transmembrane region" description="Helical; Name=2" evidence="1">
    <location>
        <begin position="89"/>
        <end position="109"/>
    </location>
</feature>
<feature type="transmembrane region" description="Helical; Name=3" evidence="1">
    <location>
        <begin position="135"/>
        <end position="155"/>
    </location>
</feature>
<feature type="transmembrane region" description="Helical; Name=4" evidence="1">
    <location>
        <begin position="186"/>
        <end position="206"/>
    </location>
</feature>
<feature type="transmembrane region" description="Helical; Name=5" evidence="1">
    <location>
        <begin position="230"/>
        <end position="250"/>
    </location>
</feature>
<feature type="transmembrane region" description="Helical; Name=6" evidence="1">
    <location>
        <begin position="293"/>
        <end position="313"/>
    </location>
</feature>
<feature type="repeat" description="Solcar 1">
    <location>
        <begin position="31"/>
        <end position="117"/>
    </location>
</feature>
<feature type="repeat" description="Solcar 2">
    <location>
        <begin position="129"/>
        <end position="214"/>
    </location>
</feature>
<feature type="repeat" description="Solcar 3">
    <location>
        <begin position="224"/>
        <end position="312"/>
    </location>
</feature>
<feature type="sequence variant" id="VAR_032970" description="In dbSNP:rs17854359." evidence="2">
    <original>S</original>
    <variation>P</variation>
    <location>
        <position position="39"/>
    </location>
</feature>
<feature type="sequence variant" id="VAR_082152" description="In MECREN; loss-of-function variant unable to rescue motor deficiencies in zebrafish morphants; dbSNP:rs864321624." evidence="4 5 6 7">
    <original>N</original>
    <variation>D</variation>
    <location>
        <position position="291"/>
    </location>
</feature>
<feature type="sequence variant" id="VAR_032971" description="In dbSNP:rs17854358." evidence="2 3">
    <original>L</original>
    <variation>M</variation>
    <location>
        <position position="312"/>
    </location>
</feature>
<gene>
    <name type="primary">SLC25A42</name>
</gene>
<keyword id="KW-0225">Disease variant</keyword>
<keyword id="KW-0472">Membrane</keyword>
<keyword id="KW-0496">Mitochondrion</keyword>
<keyword id="KW-0999">Mitochondrion inner membrane</keyword>
<keyword id="KW-1267">Proteomics identification</keyword>
<keyword id="KW-1185">Reference proteome</keyword>
<keyword id="KW-0677">Repeat</keyword>
<keyword id="KW-0812">Transmembrane</keyword>
<keyword id="KW-1133">Transmembrane helix</keyword>
<keyword id="KW-0813">Transport</keyword>
<dbReference type="EMBL" id="FN356975">
    <property type="protein sequence ID" value="CAX94853.1"/>
    <property type="molecule type" value="mRNA"/>
</dbReference>
<dbReference type="EMBL" id="AC002126">
    <property type="protein sequence ID" value="AAB86983.1"/>
    <property type="molecule type" value="Genomic_DNA"/>
</dbReference>
<dbReference type="EMBL" id="AC004143">
    <property type="protein sequence ID" value="AAC02758.1"/>
    <property type="status" value="ALT_SEQ"/>
    <property type="molecule type" value="Genomic_DNA"/>
</dbReference>
<dbReference type="EMBL" id="BC045598">
    <property type="protein sequence ID" value="AAH45598.1"/>
    <property type="molecule type" value="mRNA"/>
</dbReference>
<dbReference type="CCDS" id="CCDS32966.1"/>
<dbReference type="RefSeq" id="NP_001308473.1">
    <property type="nucleotide sequence ID" value="NM_001321544.2"/>
</dbReference>
<dbReference type="RefSeq" id="NP_848621.2">
    <property type="nucleotide sequence ID" value="NM_178526.5"/>
</dbReference>
<dbReference type="RefSeq" id="XP_005259918.1">
    <property type="nucleotide sequence ID" value="XM_005259861.3"/>
</dbReference>
<dbReference type="RefSeq" id="XP_011526239.1">
    <property type="nucleotide sequence ID" value="XM_011527937.2"/>
</dbReference>
<dbReference type="SMR" id="Q86VD7"/>
<dbReference type="BioGRID" id="129877">
    <property type="interactions" value="14"/>
</dbReference>
<dbReference type="FunCoup" id="Q86VD7">
    <property type="interactions" value="2090"/>
</dbReference>
<dbReference type="IntAct" id="Q86VD7">
    <property type="interactions" value="11"/>
</dbReference>
<dbReference type="STRING" id="9606.ENSP00000326693"/>
<dbReference type="TCDB" id="2.A.29.12.2">
    <property type="family name" value="the mitochondrial carrier (mc) family"/>
</dbReference>
<dbReference type="GlyGen" id="Q86VD7">
    <property type="glycosylation" value="1 site"/>
</dbReference>
<dbReference type="iPTMnet" id="Q86VD7"/>
<dbReference type="PhosphoSitePlus" id="Q86VD7"/>
<dbReference type="BioMuta" id="SLC25A42"/>
<dbReference type="DMDM" id="150416122"/>
<dbReference type="jPOST" id="Q86VD7"/>
<dbReference type="MassIVE" id="Q86VD7"/>
<dbReference type="PaxDb" id="9606-ENSP00000326693"/>
<dbReference type="PeptideAtlas" id="Q86VD7"/>
<dbReference type="ProteomicsDB" id="69988"/>
<dbReference type="Pumba" id="Q86VD7"/>
<dbReference type="Antibodypedia" id="28336">
    <property type="antibodies" value="38 antibodies from 15 providers"/>
</dbReference>
<dbReference type="DNASU" id="284439"/>
<dbReference type="Ensembl" id="ENST00000318596.8">
    <property type="protein sequence ID" value="ENSP00000326693.6"/>
    <property type="gene ID" value="ENSG00000181035.14"/>
</dbReference>
<dbReference type="GeneID" id="284439"/>
<dbReference type="KEGG" id="hsa:284439"/>
<dbReference type="MANE-Select" id="ENST00000318596.8">
    <property type="protein sequence ID" value="ENSP00000326693.6"/>
    <property type="RefSeq nucleotide sequence ID" value="NM_178526.5"/>
    <property type="RefSeq protein sequence ID" value="NP_848621.2"/>
</dbReference>
<dbReference type="UCSC" id="uc002nlf.5">
    <property type="organism name" value="human"/>
</dbReference>
<dbReference type="AGR" id="HGNC:28380"/>
<dbReference type="CTD" id="284439"/>
<dbReference type="DisGeNET" id="284439"/>
<dbReference type="GeneCards" id="SLC25A42"/>
<dbReference type="HGNC" id="HGNC:28380">
    <property type="gene designation" value="SLC25A42"/>
</dbReference>
<dbReference type="HPA" id="ENSG00000181035">
    <property type="expression patterns" value="Tissue enhanced (liver)"/>
</dbReference>
<dbReference type="MalaCards" id="SLC25A42"/>
<dbReference type="MIM" id="610823">
    <property type="type" value="gene"/>
</dbReference>
<dbReference type="MIM" id="618416">
    <property type="type" value="phenotype"/>
</dbReference>
<dbReference type="neXtProt" id="NX_Q86VD7"/>
<dbReference type="OpenTargets" id="ENSG00000181035"/>
<dbReference type="PharmGKB" id="PA162403703"/>
<dbReference type="VEuPathDB" id="HostDB:ENSG00000181035"/>
<dbReference type="eggNOG" id="KOG0752">
    <property type="taxonomic scope" value="Eukaryota"/>
</dbReference>
<dbReference type="GeneTree" id="ENSGT00940000158163"/>
<dbReference type="HOGENOM" id="CLU_015166_10_1_1"/>
<dbReference type="InParanoid" id="Q86VD7"/>
<dbReference type="OMA" id="VYERMKW"/>
<dbReference type="OrthoDB" id="270584at2759"/>
<dbReference type="PAN-GO" id="Q86VD7">
    <property type="GO annotations" value="0 GO annotations based on evolutionary models"/>
</dbReference>
<dbReference type="PhylomeDB" id="Q86VD7"/>
<dbReference type="TreeFam" id="TF314806"/>
<dbReference type="PathwayCommons" id="Q86VD7"/>
<dbReference type="Reactome" id="R-HSA-199220">
    <property type="pathway name" value="Vitamin B5 (pantothenate) metabolism"/>
</dbReference>
<dbReference type="SignaLink" id="Q86VD7"/>
<dbReference type="BioGRID-ORCS" id="284439">
    <property type="hits" value="23 hits in 1161 CRISPR screens"/>
</dbReference>
<dbReference type="ChiTaRS" id="SLC25A42">
    <property type="organism name" value="human"/>
</dbReference>
<dbReference type="GenomeRNAi" id="284439"/>
<dbReference type="Pharos" id="Q86VD7">
    <property type="development level" value="Tbio"/>
</dbReference>
<dbReference type="PRO" id="PR:Q86VD7"/>
<dbReference type="Proteomes" id="UP000005640">
    <property type="component" value="Chromosome 19"/>
</dbReference>
<dbReference type="RNAct" id="Q86VD7">
    <property type="molecule type" value="protein"/>
</dbReference>
<dbReference type="Bgee" id="ENSG00000181035">
    <property type="expression patterns" value="Expressed in right lobe of liver and 162 other cell types or tissues"/>
</dbReference>
<dbReference type="ExpressionAtlas" id="Q86VD7">
    <property type="expression patterns" value="baseline and differential"/>
</dbReference>
<dbReference type="GO" id="GO:0005743">
    <property type="term" value="C:mitochondrial inner membrane"/>
    <property type="evidence" value="ECO:0000304"/>
    <property type="project" value="Reactome"/>
</dbReference>
<dbReference type="GO" id="GO:0005739">
    <property type="term" value="C:mitochondrion"/>
    <property type="evidence" value="ECO:0000314"/>
    <property type="project" value="UniProtKB"/>
</dbReference>
<dbReference type="GO" id="GO:0005634">
    <property type="term" value="C:nucleus"/>
    <property type="evidence" value="ECO:0007005"/>
    <property type="project" value="UniProtKB"/>
</dbReference>
<dbReference type="GO" id="GO:0043262">
    <property type="term" value="F:ADP phosphatase activity"/>
    <property type="evidence" value="ECO:0000314"/>
    <property type="project" value="UniProtKB"/>
</dbReference>
<dbReference type="GO" id="GO:0015217">
    <property type="term" value="F:ADP transmembrane transporter activity"/>
    <property type="evidence" value="ECO:0000314"/>
    <property type="project" value="UniProtKB"/>
</dbReference>
<dbReference type="GO" id="GO:0080122">
    <property type="term" value="F:AMP transmembrane transporter activity"/>
    <property type="evidence" value="ECO:0000314"/>
    <property type="project" value="UniProtKB"/>
</dbReference>
<dbReference type="GO" id="GO:0005347">
    <property type="term" value="F:ATP transmembrane transporter activity"/>
    <property type="evidence" value="ECO:0000314"/>
    <property type="project" value="UniProtKB"/>
</dbReference>
<dbReference type="GO" id="GO:0015228">
    <property type="term" value="F:coenzyme A transmembrane transporter activity"/>
    <property type="evidence" value="ECO:0000314"/>
    <property type="project" value="UniProtKB"/>
</dbReference>
<dbReference type="GO" id="GO:0015866">
    <property type="term" value="P:ADP transport"/>
    <property type="evidence" value="ECO:0000314"/>
    <property type="project" value="UniProtKB"/>
</dbReference>
<dbReference type="GO" id="GO:0080121">
    <property type="term" value="P:AMP transport"/>
    <property type="evidence" value="ECO:0000314"/>
    <property type="project" value="UniProtKB"/>
</dbReference>
<dbReference type="GO" id="GO:0015867">
    <property type="term" value="P:ATP transport"/>
    <property type="evidence" value="ECO:0000314"/>
    <property type="project" value="UniProtKB"/>
</dbReference>
<dbReference type="GO" id="GO:0035349">
    <property type="term" value="P:coenzyme A transmembrane transport"/>
    <property type="evidence" value="ECO:0000314"/>
    <property type="project" value="UniProtKB"/>
</dbReference>
<dbReference type="GO" id="GO:0015939">
    <property type="term" value="P:pantothenate metabolic process"/>
    <property type="evidence" value="ECO:0000304"/>
    <property type="project" value="Reactome"/>
</dbReference>
<dbReference type="FunFam" id="1.50.40.10:FF:000014">
    <property type="entry name" value="mitochondrial coenzyme A transporter SLC25A42"/>
    <property type="match status" value="1"/>
</dbReference>
<dbReference type="Gene3D" id="1.50.40.10">
    <property type="entry name" value="Mitochondrial carrier domain"/>
    <property type="match status" value="1"/>
</dbReference>
<dbReference type="InterPro" id="IPR014762">
    <property type="entry name" value="DNA_mismatch_repair_CS"/>
</dbReference>
<dbReference type="InterPro" id="IPR002167">
    <property type="entry name" value="GDC-like"/>
</dbReference>
<dbReference type="InterPro" id="IPR002067">
    <property type="entry name" value="Mit_carrier"/>
</dbReference>
<dbReference type="InterPro" id="IPR018108">
    <property type="entry name" value="Mitochondrial_sb/sol_carrier"/>
</dbReference>
<dbReference type="InterPro" id="IPR023395">
    <property type="entry name" value="Mt_carrier_dom_sf"/>
</dbReference>
<dbReference type="PANTHER" id="PTHR24089">
    <property type="entry name" value="SOLUTE CARRIER FAMILY 25"/>
    <property type="match status" value="1"/>
</dbReference>
<dbReference type="Pfam" id="PF00153">
    <property type="entry name" value="Mito_carr"/>
    <property type="match status" value="3"/>
</dbReference>
<dbReference type="PRINTS" id="PR00928">
    <property type="entry name" value="GRAVESDC"/>
</dbReference>
<dbReference type="PRINTS" id="PR00926">
    <property type="entry name" value="MITOCARRIER"/>
</dbReference>
<dbReference type="SUPFAM" id="SSF103506">
    <property type="entry name" value="Mitochondrial carrier"/>
    <property type="match status" value="1"/>
</dbReference>
<dbReference type="PROSITE" id="PS50920">
    <property type="entry name" value="SOLCAR"/>
    <property type="match status" value="3"/>
</dbReference>
<accession>Q86VD7</accession>
<accession>D2T2J5</accession>
<accession>O14553</accession>
<accession>O43378</accession>
<reference key="1">
    <citation type="journal article" date="2009" name="J. Biol. Chem.">
        <title>A novel member of solute carrier family 25 (SLC25A42) is a transporter of coenzyme A and adenosine 3',5'-diphosphate in human mitochondria.</title>
        <authorList>
            <person name="Fiermonte G."/>
            <person name="Paradies E."/>
            <person name="Todisco S."/>
            <person name="Marobbio C.M."/>
            <person name="Palmieri F."/>
        </authorList>
    </citation>
    <scope>NUCLEOTIDE SEQUENCE [MRNA]</scope>
    <scope>VARIANT MET-312</scope>
    <scope>FUNCTION</scope>
    <scope>SUBCELLULAR LOCATION</scope>
    <scope>TRANSPORTER ACTIVITY</scope>
    <scope>BIOPHYSICOCHEMICAL PROPERTIES</scope>
</reference>
<reference key="2">
    <citation type="journal article" date="2004" name="Nature">
        <title>The DNA sequence and biology of human chromosome 19.</title>
        <authorList>
            <person name="Grimwood J."/>
            <person name="Gordon L.A."/>
            <person name="Olsen A.S."/>
            <person name="Terry A."/>
            <person name="Schmutz J."/>
            <person name="Lamerdin J.E."/>
            <person name="Hellsten U."/>
            <person name="Goodstein D."/>
            <person name="Couronne O."/>
            <person name="Tran-Gyamfi M."/>
            <person name="Aerts A."/>
            <person name="Altherr M."/>
            <person name="Ashworth L."/>
            <person name="Bajorek E."/>
            <person name="Black S."/>
            <person name="Branscomb E."/>
            <person name="Caenepeel S."/>
            <person name="Carrano A.V."/>
            <person name="Caoile C."/>
            <person name="Chan Y.M."/>
            <person name="Christensen M."/>
            <person name="Cleland C.A."/>
            <person name="Copeland A."/>
            <person name="Dalin E."/>
            <person name="Dehal P."/>
            <person name="Denys M."/>
            <person name="Detter J.C."/>
            <person name="Escobar J."/>
            <person name="Flowers D."/>
            <person name="Fotopulos D."/>
            <person name="Garcia C."/>
            <person name="Georgescu A.M."/>
            <person name="Glavina T."/>
            <person name="Gomez M."/>
            <person name="Gonzales E."/>
            <person name="Groza M."/>
            <person name="Hammon N."/>
            <person name="Hawkins T."/>
            <person name="Haydu L."/>
            <person name="Ho I."/>
            <person name="Huang W."/>
            <person name="Israni S."/>
            <person name="Jett J."/>
            <person name="Kadner K."/>
            <person name="Kimball H."/>
            <person name="Kobayashi A."/>
            <person name="Larionov V."/>
            <person name="Leem S.-H."/>
            <person name="Lopez F."/>
            <person name="Lou Y."/>
            <person name="Lowry S."/>
            <person name="Malfatti S."/>
            <person name="Martinez D."/>
            <person name="McCready P.M."/>
            <person name="Medina C."/>
            <person name="Morgan J."/>
            <person name="Nelson K."/>
            <person name="Nolan M."/>
            <person name="Ovcharenko I."/>
            <person name="Pitluck S."/>
            <person name="Pollard M."/>
            <person name="Popkie A.P."/>
            <person name="Predki P."/>
            <person name="Quan G."/>
            <person name="Ramirez L."/>
            <person name="Rash S."/>
            <person name="Retterer J."/>
            <person name="Rodriguez A."/>
            <person name="Rogers S."/>
            <person name="Salamov A."/>
            <person name="Salazar A."/>
            <person name="She X."/>
            <person name="Smith D."/>
            <person name="Slezak T."/>
            <person name="Solovyev V."/>
            <person name="Thayer N."/>
            <person name="Tice H."/>
            <person name="Tsai M."/>
            <person name="Ustaszewska A."/>
            <person name="Vo N."/>
            <person name="Wagner M."/>
            <person name="Wheeler J."/>
            <person name="Wu K."/>
            <person name="Xie G."/>
            <person name="Yang J."/>
            <person name="Dubchak I."/>
            <person name="Furey T.S."/>
            <person name="DeJong P."/>
            <person name="Dickson M."/>
            <person name="Gordon D."/>
            <person name="Eichler E.E."/>
            <person name="Pennacchio L.A."/>
            <person name="Richardson P."/>
            <person name="Stubbs L."/>
            <person name="Rokhsar D.S."/>
            <person name="Myers R.M."/>
            <person name="Rubin E.M."/>
            <person name="Lucas S.M."/>
        </authorList>
    </citation>
    <scope>NUCLEOTIDE SEQUENCE [LARGE SCALE GENOMIC DNA]</scope>
</reference>
<reference key="3">
    <citation type="journal article" date="2004" name="Genome Res.">
        <title>The status, quality, and expansion of the NIH full-length cDNA project: the Mammalian Gene Collection (MGC).</title>
        <authorList>
            <consortium name="The MGC Project Team"/>
        </authorList>
    </citation>
    <scope>NUCLEOTIDE SEQUENCE [LARGE SCALE MRNA]</scope>
    <scope>VARIANTS PRO-39 AND MET-312</scope>
    <source>
        <tissue>Brain</tissue>
    </source>
</reference>
<reference key="4">
    <citation type="journal article" date="2006" name="Genomics">
        <title>Fourteen novel human members of mitochondrial solute carrier family 25 (SLC25) widely expressed in the central nervous system.</title>
        <authorList>
            <person name="Haitina T."/>
            <person name="Lindblom J."/>
            <person name="Renstroem T."/>
            <person name="Fredriksson R."/>
        </authorList>
    </citation>
    <scope>IDENTIFICATION</scope>
</reference>
<reference key="5">
    <citation type="journal article" date="2016" name="Hum. Genet.">
        <title>Mutation of the mitochondrial carrier SLC25A42 causes a novel form of mitochondrial myopathy in humans.</title>
        <authorList>
            <person name="Shamseldin H.E."/>
            <person name="Smith L.L."/>
            <person name="Kentab A."/>
            <person name="Alkhalidi H."/>
            <person name="Summers B."/>
            <person name="Alsedairy H."/>
            <person name="Xiong Y."/>
            <person name="Gupta V.A."/>
            <person name="Alkuraya F.S."/>
        </authorList>
    </citation>
    <scope>INVOLVEMENT IN MECREN</scope>
    <scope>VARIANT MECREN ASP-291</scope>
    <scope>CHARACTERIZATION OF VARIANT MECREN ASP-291</scope>
</reference>
<reference key="6">
    <citation type="journal article" date="2018" name="Clin. Genet.">
        <title>Expanding the phenotype of SLC25A42-associated mitochondrial encephalomyopathy.</title>
        <authorList>
            <person name="Almannai M."/>
            <person name="Alasmari A."/>
            <person name="Alqasmi A."/>
            <person name="Faqeih E."/>
            <person name="Al Mutairi F."/>
            <person name="Alotaibi M."/>
            <person name="Samman M.M."/>
            <person name="Eyaid W."/>
            <person name="Aljadhai Y.I."/>
            <person name="Shamseldin H.E."/>
            <person name="Craigen W."/>
            <person name="Alkuraya F.S."/>
        </authorList>
    </citation>
    <scope>INVOLVEMENT IN MECREN</scope>
    <scope>VARIANT MECREN ASP-291</scope>
</reference>
<reference key="7">
    <citation type="journal article" date="2019" name="Genet. Med.">
        <title>Autozygome and high throughput confirmation of disease genes candidacy.</title>
        <authorList>
            <person name="Maddirevula S."/>
            <person name="Alzahrani F."/>
            <person name="Al-Owain M."/>
            <person name="Al Muhaizea M.A."/>
            <person name="Kayyali H.R."/>
            <person name="AlHashem A."/>
            <person name="Rahbeeni Z."/>
            <person name="Al-Otaibi M."/>
            <person name="Alzaidan H.I."/>
            <person name="Balobaid A."/>
            <person name="El Khashab H.Y."/>
            <person name="Bubshait D.K."/>
            <person name="Faden M."/>
            <person name="Yamani S.A."/>
            <person name="Dabbagh O."/>
            <person name="Al-Mureikhi M."/>
            <person name="Jasser A.A."/>
            <person name="Alsaif H.S."/>
            <person name="Alluhaydan I."/>
            <person name="Seidahmed M.Z."/>
            <person name="Alabbasi B.H."/>
            <person name="Almogarri I."/>
            <person name="Kurdi W."/>
            <person name="Akleh H."/>
            <person name="Qari A."/>
            <person name="Al Tala S.M."/>
            <person name="Alhomaidi S."/>
            <person name="Kentab A.Y."/>
            <person name="Salih M.A."/>
            <person name="Chedrawi A."/>
            <person name="Alameer S."/>
            <person name="Tabarki B."/>
            <person name="Shamseldin H.E."/>
            <person name="Patel N."/>
            <person name="Ibrahim N."/>
            <person name="Abdulwahab F."/>
            <person name="Samira M."/>
            <person name="Goljan E."/>
            <person name="Abouelhoda M."/>
            <person name="Meyer B.F."/>
            <person name="Hashem M."/>
            <person name="Shaheen R."/>
            <person name="AlShahwan S."/>
            <person name="Alfadhel M."/>
            <person name="Ben-Omran T."/>
            <person name="Al-Qattan M.M."/>
            <person name="Monies D."/>
            <person name="Alkuraya F.S."/>
        </authorList>
    </citation>
    <scope>VARIANT MECREN ASP-291</scope>
</reference>
<reference key="8">
    <citation type="journal article" date="2019" name="JIMD Rep.">
        <title>A homozygous splice site mutation in SLC25A42, encoding the mitochondrial transporter of coenzyme A, causes metabolic crises and epileptic encephalopathy.</title>
        <authorList>
            <person name="Iuso A."/>
            <person name="Alhaddad B."/>
            <person name="Weigel C."/>
            <person name="Kotzaeridou U."/>
            <person name="Mastantuono E."/>
            <person name="Schwarzmayr T."/>
            <person name="Graf E."/>
            <person name="Terrile C."/>
            <person name="Prokisch H."/>
            <person name="Strom T.M."/>
            <person name="Hoffmann G.F."/>
            <person name="Meitinger T."/>
            <person name="Haack T.B."/>
        </authorList>
    </citation>
    <scope>VARIANT MECREN ASP-291</scope>
</reference>
<evidence type="ECO:0000255" key="1"/>
<evidence type="ECO:0000269" key="2">
    <source>
    </source>
</evidence>
<evidence type="ECO:0000269" key="3">
    <source>
    </source>
</evidence>
<evidence type="ECO:0000269" key="4">
    <source>
    </source>
</evidence>
<evidence type="ECO:0000269" key="5">
    <source>
    </source>
</evidence>
<evidence type="ECO:0000269" key="6">
    <source>
    </source>
</evidence>
<evidence type="ECO:0000269" key="7">
    <source>
    </source>
</evidence>
<evidence type="ECO:0000305" key="8"/>
<name>S2542_HUMAN</name>
<comment type="function">
    <text evidence="3">Mitochondrial carrier mediating the transport of coenzyme A (CoA) in mitochondria in exchange for intramitochondrial (deoxy)adenine nucleotides and adenosine 3',5'-diphosphate.</text>
</comment>
<comment type="catalytic activity">
    <reaction evidence="3">
        <text>ADP(out) + CoA(in) = ADP(in) + CoA(out)</text>
        <dbReference type="Rhea" id="RHEA:72839"/>
        <dbReference type="ChEBI" id="CHEBI:57287"/>
        <dbReference type="ChEBI" id="CHEBI:456216"/>
    </reaction>
</comment>
<comment type="catalytic activity">
    <reaction evidence="3">
        <text>3'-dephospho-CoA(in) + ADP(out) = 3'-dephospho-CoA(out) + ADP(in)</text>
        <dbReference type="Rhea" id="RHEA:72843"/>
        <dbReference type="ChEBI" id="CHEBI:57328"/>
        <dbReference type="ChEBI" id="CHEBI:456216"/>
    </reaction>
</comment>
<comment type="catalytic activity">
    <reaction evidence="3">
        <text>adenosine 3',5'-bisphosphate(in) + ADP(out) = adenosine 3',5'-bisphosphate(out) + ADP(in)</text>
        <dbReference type="Rhea" id="RHEA:72847"/>
        <dbReference type="ChEBI" id="CHEBI:58343"/>
        <dbReference type="ChEBI" id="CHEBI:456216"/>
    </reaction>
</comment>
<comment type="catalytic activity">
    <reaction evidence="3">
        <text>AMP(in) + ADP(out) = AMP(out) + ADP(in)</text>
        <dbReference type="Rhea" id="RHEA:72851"/>
        <dbReference type="ChEBI" id="CHEBI:456215"/>
        <dbReference type="ChEBI" id="CHEBI:456216"/>
    </reaction>
</comment>
<comment type="catalytic activity">
    <reaction evidence="3">
        <text>dADP(in) + ADP(out) = dADP(out) + ADP(in)</text>
        <dbReference type="Rhea" id="RHEA:72855"/>
        <dbReference type="ChEBI" id="CHEBI:57667"/>
        <dbReference type="ChEBI" id="CHEBI:456216"/>
    </reaction>
</comment>
<comment type="catalytic activity">
    <reaction evidence="3">
        <text>ADP(in) + ATP(out) = ADP(out) + ATP(in)</text>
        <dbReference type="Rhea" id="RHEA:34999"/>
        <dbReference type="ChEBI" id="CHEBI:30616"/>
        <dbReference type="ChEBI" id="CHEBI:456216"/>
    </reaction>
</comment>
<comment type="biophysicochemical properties">
    <kinetics>
        <KM evidence="3">55 uM for ADP</KM>
        <KM evidence="3">50 uM for adenosine 3',5'-bisphosphate</KM>
        <KM evidence="3">71 uM for CoA</KM>
        <KM evidence="3">64 uM for 3'-dephospho-CoA</KM>
        <Vmax evidence="3">267.0 umol/min/g protein for ADP</Vmax>
        <Vmax evidence="3">333.0 umol/min/g protein for adenosine 3',5'-bisphosphate</Vmax>
        <Vmax evidence="3">116.0 umol/min/g protein for CoA</Vmax>
        <Vmax evidence="3">129.0 umol/min/g protein for 3'-dephospho-CoA</Vmax>
    </kinetics>
</comment>
<comment type="interaction">
    <interactant intactId="EBI-6598313">
        <id>Q86VD7</id>
    </interactant>
    <interactant intactId="EBI-948001">
        <id>Q15323</id>
        <label>KRT31</label>
    </interactant>
    <organismsDiffer>false</organismsDiffer>
    <experiments>3</experiments>
</comment>
<comment type="interaction">
    <interactant intactId="EBI-6598313">
        <id>Q86VD7</id>
    </interactant>
    <interactant intactId="EBI-1047093">
        <id>O76011</id>
        <label>KRT34</label>
    </interactant>
    <organismsDiffer>false</organismsDiffer>
    <experiments>3</experiments>
</comment>
<comment type="interaction">
    <interactant intactId="EBI-6598313">
        <id>Q86VD7</id>
    </interactant>
    <interactant intactId="EBI-10171774">
        <id>P60410</id>
        <label>KRTAP10-8</label>
    </interactant>
    <organismsDiffer>false</organismsDiffer>
    <experiments>3</experiments>
</comment>
<comment type="interaction">
    <interactant intactId="EBI-6598313">
        <id>Q86VD7</id>
    </interactant>
    <interactant intactId="EBI-11522433">
        <id>Q5JR59-3</id>
        <label>MTUS2</label>
    </interactant>
    <organismsDiffer>false</organismsDiffer>
    <experiments>3</experiments>
</comment>
<comment type="subcellular location">
    <subcellularLocation>
        <location evidence="3">Mitochondrion inner membrane</location>
        <topology evidence="3">Multi-pass membrane protein</topology>
    </subcellularLocation>
</comment>
<comment type="disease" evidence="4 5 6 7">
    <disease id="DI-05563">
        <name>Metabolic crises, recurrent, with variable encephalomyopathic features and neurologic regression</name>
        <acronym>MECREN</acronym>
        <description>An autosomal recessive disease characterized by muscle weakness, developmental delay, lactic acidosis, and encephalopathy. The severity of the clinical manifestations is highly variable even within affected individuals of the same family, ranging from asymptomatic lactic acidosis to severe developmental regression, epilepsy, intellectual disability, metabolic crisis, and multiorgan involvement.</description>
        <dbReference type="MIM" id="618416"/>
    </disease>
    <text>The disease is caused by variants affecting the gene represented in this entry.</text>
</comment>
<comment type="similarity">
    <text evidence="8">Belongs to the mitochondrial carrier (TC 2.A.29) family.</text>
</comment>
<comment type="sequence caution" evidence="8">
    <conflict type="erroneous gene model prediction">
        <sequence resource="EMBL-CDS" id="AAC02758"/>
    </conflict>
</comment>